<keyword id="KW-0067">ATP-binding</keyword>
<keyword id="KW-0963">Cytoplasm</keyword>
<keyword id="KW-0418">Kinase</keyword>
<keyword id="KW-0545">Nucleotide biosynthesis</keyword>
<keyword id="KW-0547">Nucleotide-binding</keyword>
<keyword id="KW-1185">Reference proteome</keyword>
<keyword id="KW-0808">Transferase</keyword>
<feature type="chain" id="PRO_1000204413" description="Adenylate kinase">
    <location>
        <begin position="1"/>
        <end position="214"/>
    </location>
</feature>
<feature type="region of interest" description="NMP" evidence="1">
    <location>
        <begin position="30"/>
        <end position="59"/>
    </location>
</feature>
<feature type="region of interest" description="LID" evidence="1">
    <location>
        <begin position="126"/>
        <end position="161"/>
    </location>
</feature>
<feature type="binding site" evidence="1">
    <location>
        <begin position="10"/>
        <end position="15"/>
    </location>
    <ligand>
        <name>ATP</name>
        <dbReference type="ChEBI" id="CHEBI:30616"/>
    </ligand>
</feature>
<feature type="binding site" evidence="1">
    <location>
        <position position="31"/>
    </location>
    <ligand>
        <name>AMP</name>
        <dbReference type="ChEBI" id="CHEBI:456215"/>
    </ligand>
</feature>
<feature type="binding site" evidence="1">
    <location>
        <position position="36"/>
    </location>
    <ligand>
        <name>AMP</name>
        <dbReference type="ChEBI" id="CHEBI:456215"/>
    </ligand>
</feature>
<feature type="binding site" evidence="1">
    <location>
        <begin position="57"/>
        <end position="59"/>
    </location>
    <ligand>
        <name>AMP</name>
        <dbReference type="ChEBI" id="CHEBI:456215"/>
    </ligand>
</feature>
<feature type="binding site" evidence="1">
    <location>
        <position position="92"/>
    </location>
    <ligand>
        <name>AMP</name>
        <dbReference type="ChEBI" id="CHEBI:456215"/>
    </ligand>
</feature>
<feature type="binding site" evidence="1">
    <location>
        <position position="127"/>
    </location>
    <ligand>
        <name>ATP</name>
        <dbReference type="ChEBI" id="CHEBI:30616"/>
    </ligand>
</feature>
<feature type="binding site" evidence="1">
    <location>
        <position position="158"/>
    </location>
    <ligand>
        <name>AMP</name>
        <dbReference type="ChEBI" id="CHEBI:456215"/>
    </ligand>
</feature>
<feature type="binding site" evidence="1">
    <location>
        <position position="169"/>
    </location>
    <ligand>
        <name>AMP</name>
        <dbReference type="ChEBI" id="CHEBI:456215"/>
    </ligand>
</feature>
<feature type="binding site" evidence="1">
    <location>
        <position position="198"/>
    </location>
    <ligand>
        <name>ATP</name>
        <dbReference type="ChEBI" id="CHEBI:30616"/>
    </ligand>
</feature>
<sequence length="214" mass="22810">MIIVLLGPPGAGKGTQGERLAARLDVPKIATGDVLRAAVKEGTPLGLEAKAAMDRGDLVPDAVIMGIMKEALAAPSAAKGAILDGVVRTTPQAAGLNDMLVALGRPLDAVLLFEVDEDELVRRLSGRTTCEACQRPFFGRQPGETCTEGGVSGTLVRRKDDEPEAIRKRMEVYREQTSPVIHWYEKSGANLVRVDAIGTLEEVEGRVLSALRIS</sequence>
<comment type="function">
    <text evidence="1">Catalyzes the reversible transfer of the terminal phosphate group between ATP and AMP. Plays an important role in cellular energy homeostasis and in adenine nucleotide metabolism.</text>
</comment>
<comment type="catalytic activity">
    <reaction evidence="1">
        <text>AMP + ATP = 2 ADP</text>
        <dbReference type="Rhea" id="RHEA:12973"/>
        <dbReference type="ChEBI" id="CHEBI:30616"/>
        <dbReference type="ChEBI" id="CHEBI:456215"/>
        <dbReference type="ChEBI" id="CHEBI:456216"/>
        <dbReference type="EC" id="2.7.4.3"/>
    </reaction>
</comment>
<comment type="pathway">
    <text evidence="1">Purine metabolism; AMP biosynthesis via salvage pathway; AMP from ADP: step 1/1.</text>
</comment>
<comment type="subunit">
    <text evidence="1">Monomer.</text>
</comment>
<comment type="subcellular location">
    <subcellularLocation>
        <location evidence="1">Cytoplasm</location>
    </subcellularLocation>
</comment>
<comment type="domain">
    <text evidence="1">Consists of three domains, a large central CORE domain and two small peripheral domains, NMPbind and LID, which undergo movements during catalysis. The LID domain closes over the site of phosphoryl transfer upon ATP binding. Assembling and dissambling the active center during each catalytic cycle provides an effective means to prevent ATP hydrolysis.</text>
</comment>
<comment type="similarity">
    <text evidence="1">Belongs to the adenylate kinase family.</text>
</comment>
<proteinExistence type="inferred from homology"/>
<evidence type="ECO:0000255" key="1">
    <source>
        <dbReference type="HAMAP-Rule" id="MF_00235"/>
    </source>
</evidence>
<gene>
    <name evidence="1" type="primary">adk</name>
    <name type="ordered locus">GAU_0894</name>
</gene>
<protein>
    <recommendedName>
        <fullName evidence="1">Adenylate kinase</fullName>
        <shortName evidence="1">AK</shortName>
        <ecNumber evidence="1">2.7.4.3</ecNumber>
    </recommendedName>
    <alternativeName>
        <fullName evidence="1">ATP-AMP transphosphorylase</fullName>
    </alternativeName>
    <alternativeName>
        <fullName evidence="1">ATP:AMP phosphotransferase</fullName>
    </alternativeName>
    <alternativeName>
        <fullName evidence="1">Adenylate monophosphate kinase</fullName>
    </alternativeName>
</protein>
<accession>C1A6S6</accession>
<reference key="1">
    <citation type="submission" date="2006-03" db="EMBL/GenBank/DDBJ databases">
        <title>Complete genome sequence of Gemmatimonas aurantiaca T-27 that represents a novel phylum Gemmatimonadetes.</title>
        <authorList>
            <person name="Takasaki K."/>
            <person name="Ichikawa N."/>
            <person name="Miura H."/>
            <person name="Matsushita S."/>
            <person name="Watanabe Y."/>
            <person name="Oguchi A."/>
            <person name="Ankai A."/>
            <person name="Yashiro I."/>
            <person name="Takahashi M."/>
            <person name="Terui Y."/>
            <person name="Fukui S."/>
            <person name="Yokoyama H."/>
            <person name="Tanikawa S."/>
            <person name="Hanada S."/>
            <person name="Kamagata Y."/>
            <person name="Fujita N."/>
        </authorList>
    </citation>
    <scope>NUCLEOTIDE SEQUENCE [LARGE SCALE GENOMIC DNA]</scope>
    <source>
        <strain>DSM 14586 / JCM 11422 / NBRC 100505 / T-27</strain>
    </source>
</reference>
<name>KAD_GEMAT</name>
<dbReference type="EC" id="2.7.4.3" evidence="1"/>
<dbReference type="EMBL" id="AP009153">
    <property type="protein sequence ID" value="BAH37936.1"/>
    <property type="molecule type" value="Genomic_DNA"/>
</dbReference>
<dbReference type="RefSeq" id="WP_012682383.1">
    <property type="nucleotide sequence ID" value="NC_012489.1"/>
</dbReference>
<dbReference type="SMR" id="C1A6S6"/>
<dbReference type="STRING" id="379066.GAU_0894"/>
<dbReference type="KEGG" id="gau:GAU_0894"/>
<dbReference type="eggNOG" id="COG0563">
    <property type="taxonomic scope" value="Bacteria"/>
</dbReference>
<dbReference type="HOGENOM" id="CLU_032354_1_2_0"/>
<dbReference type="OrthoDB" id="9805030at2"/>
<dbReference type="UniPathway" id="UPA00588">
    <property type="reaction ID" value="UER00649"/>
</dbReference>
<dbReference type="Proteomes" id="UP000002209">
    <property type="component" value="Chromosome"/>
</dbReference>
<dbReference type="GO" id="GO:0005737">
    <property type="term" value="C:cytoplasm"/>
    <property type="evidence" value="ECO:0007669"/>
    <property type="project" value="UniProtKB-SubCell"/>
</dbReference>
<dbReference type="GO" id="GO:0004017">
    <property type="term" value="F:adenylate kinase activity"/>
    <property type="evidence" value="ECO:0007669"/>
    <property type="project" value="UniProtKB-UniRule"/>
</dbReference>
<dbReference type="GO" id="GO:0005524">
    <property type="term" value="F:ATP binding"/>
    <property type="evidence" value="ECO:0007669"/>
    <property type="project" value="UniProtKB-UniRule"/>
</dbReference>
<dbReference type="GO" id="GO:0044209">
    <property type="term" value="P:AMP salvage"/>
    <property type="evidence" value="ECO:0007669"/>
    <property type="project" value="UniProtKB-UniRule"/>
</dbReference>
<dbReference type="CDD" id="cd01428">
    <property type="entry name" value="ADK"/>
    <property type="match status" value="1"/>
</dbReference>
<dbReference type="Gene3D" id="3.40.50.300">
    <property type="entry name" value="P-loop containing nucleotide triphosphate hydrolases"/>
    <property type="match status" value="1"/>
</dbReference>
<dbReference type="HAMAP" id="MF_00235">
    <property type="entry name" value="Adenylate_kinase_Adk"/>
    <property type="match status" value="1"/>
</dbReference>
<dbReference type="InterPro" id="IPR006259">
    <property type="entry name" value="Adenyl_kin_sub"/>
</dbReference>
<dbReference type="InterPro" id="IPR000850">
    <property type="entry name" value="Adenylat/UMP-CMP_kin"/>
</dbReference>
<dbReference type="InterPro" id="IPR027417">
    <property type="entry name" value="P-loop_NTPase"/>
</dbReference>
<dbReference type="NCBIfam" id="TIGR01351">
    <property type="entry name" value="adk"/>
    <property type="match status" value="1"/>
</dbReference>
<dbReference type="NCBIfam" id="NF001381">
    <property type="entry name" value="PRK00279.1-3"/>
    <property type="match status" value="1"/>
</dbReference>
<dbReference type="NCBIfam" id="NF011100">
    <property type="entry name" value="PRK14527.1"/>
    <property type="match status" value="1"/>
</dbReference>
<dbReference type="PANTHER" id="PTHR23359">
    <property type="entry name" value="NUCLEOTIDE KINASE"/>
    <property type="match status" value="1"/>
</dbReference>
<dbReference type="Pfam" id="PF00406">
    <property type="entry name" value="ADK"/>
    <property type="match status" value="1"/>
</dbReference>
<dbReference type="PRINTS" id="PR00094">
    <property type="entry name" value="ADENYLTKNASE"/>
</dbReference>
<dbReference type="SUPFAM" id="SSF52540">
    <property type="entry name" value="P-loop containing nucleoside triphosphate hydrolases"/>
    <property type="match status" value="1"/>
</dbReference>
<organism>
    <name type="scientific">Gemmatimonas aurantiaca (strain DSM 14586 / JCM 11422 / NBRC 100505 / T-27)</name>
    <dbReference type="NCBI Taxonomy" id="379066"/>
    <lineage>
        <taxon>Bacteria</taxon>
        <taxon>Pseudomonadati</taxon>
        <taxon>Gemmatimonadota</taxon>
        <taxon>Gemmatimonadia</taxon>
        <taxon>Gemmatimonadales</taxon>
        <taxon>Gemmatimonadaceae</taxon>
        <taxon>Gemmatimonas</taxon>
    </lineage>
</organism>